<comment type="function">
    <text evidence="1">Activates KDO (a required 8-carbon sugar) for incorporation into bacterial lipopolysaccharide in Gram-negative bacteria.</text>
</comment>
<comment type="catalytic activity">
    <reaction evidence="1">
        <text>3-deoxy-alpha-D-manno-oct-2-ulosonate + CTP = CMP-3-deoxy-beta-D-manno-octulosonate + diphosphate</text>
        <dbReference type="Rhea" id="RHEA:23448"/>
        <dbReference type="ChEBI" id="CHEBI:33019"/>
        <dbReference type="ChEBI" id="CHEBI:37563"/>
        <dbReference type="ChEBI" id="CHEBI:85986"/>
        <dbReference type="ChEBI" id="CHEBI:85987"/>
        <dbReference type="EC" id="2.7.7.38"/>
    </reaction>
</comment>
<comment type="pathway">
    <text evidence="1">Nucleotide-sugar biosynthesis; CMP-3-deoxy-D-manno-octulosonate biosynthesis; CMP-3-deoxy-D-manno-octulosonate from 3-deoxy-D-manno-octulosonate and CTP: step 1/1.</text>
</comment>
<comment type="pathway">
    <text evidence="1">Bacterial outer membrane biogenesis; lipopolysaccharide biosynthesis.</text>
</comment>
<comment type="subcellular location">
    <subcellularLocation>
        <location evidence="1">Cytoplasm</location>
    </subcellularLocation>
</comment>
<comment type="similarity">
    <text evidence="1">Belongs to the KdsB family.</text>
</comment>
<protein>
    <recommendedName>
        <fullName evidence="1">3-deoxy-manno-octulosonate cytidylyltransferase</fullName>
        <ecNumber evidence="1">2.7.7.38</ecNumber>
    </recommendedName>
    <alternativeName>
        <fullName evidence="1">CMP-2-keto-3-deoxyoctulosonic acid synthase</fullName>
        <shortName evidence="1">CKS</shortName>
        <shortName evidence="1">CMP-KDO synthase</shortName>
    </alternativeName>
</protein>
<keyword id="KW-0963">Cytoplasm</keyword>
<keyword id="KW-0448">Lipopolysaccharide biosynthesis</keyword>
<keyword id="KW-0548">Nucleotidyltransferase</keyword>
<keyword id="KW-1185">Reference proteome</keyword>
<keyword id="KW-0808">Transferase</keyword>
<reference key="1">
    <citation type="journal article" date="2008" name="PLoS Genet.">
        <title>Complete genome sequence of the complex carbohydrate-degrading marine bacterium, Saccharophagus degradans strain 2-40 T.</title>
        <authorList>
            <person name="Weiner R.M."/>
            <person name="Taylor L.E. II"/>
            <person name="Henrissat B."/>
            <person name="Hauser L."/>
            <person name="Land M."/>
            <person name="Coutinho P.M."/>
            <person name="Rancurel C."/>
            <person name="Saunders E.H."/>
            <person name="Longmire A.G."/>
            <person name="Zhang H."/>
            <person name="Bayer E.A."/>
            <person name="Gilbert H.J."/>
            <person name="Larimer F."/>
            <person name="Zhulin I.B."/>
            <person name="Ekborg N.A."/>
            <person name="Lamed R."/>
            <person name="Richardson P.M."/>
            <person name="Borovok I."/>
            <person name="Hutcheson S."/>
        </authorList>
    </citation>
    <scope>NUCLEOTIDE SEQUENCE [LARGE SCALE GENOMIC DNA]</scope>
    <source>
        <strain>2-40 / ATCC 43961 / DSM 17024</strain>
    </source>
</reference>
<proteinExistence type="inferred from homology"/>
<accession>Q21J11</accession>
<dbReference type="EC" id="2.7.7.38" evidence="1"/>
<dbReference type="EMBL" id="CP000282">
    <property type="protein sequence ID" value="ABD81318.1"/>
    <property type="molecule type" value="Genomic_DNA"/>
</dbReference>
<dbReference type="RefSeq" id="WP_011468536.1">
    <property type="nucleotide sequence ID" value="NC_007912.1"/>
</dbReference>
<dbReference type="SMR" id="Q21J11"/>
<dbReference type="STRING" id="203122.Sde_2058"/>
<dbReference type="GeneID" id="98613732"/>
<dbReference type="KEGG" id="sde:Sde_2058"/>
<dbReference type="eggNOG" id="COG1212">
    <property type="taxonomic scope" value="Bacteria"/>
</dbReference>
<dbReference type="HOGENOM" id="CLU_065038_1_0_6"/>
<dbReference type="OrthoDB" id="9815559at2"/>
<dbReference type="UniPathway" id="UPA00030"/>
<dbReference type="UniPathway" id="UPA00358">
    <property type="reaction ID" value="UER00476"/>
</dbReference>
<dbReference type="Proteomes" id="UP000001947">
    <property type="component" value="Chromosome"/>
</dbReference>
<dbReference type="GO" id="GO:0005829">
    <property type="term" value="C:cytosol"/>
    <property type="evidence" value="ECO:0007669"/>
    <property type="project" value="TreeGrafter"/>
</dbReference>
<dbReference type="GO" id="GO:0008690">
    <property type="term" value="F:3-deoxy-manno-octulosonate cytidylyltransferase activity"/>
    <property type="evidence" value="ECO:0007669"/>
    <property type="project" value="UniProtKB-UniRule"/>
</dbReference>
<dbReference type="GO" id="GO:0033468">
    <property type="term" value="P:CMP-keto-3-deoxy-D-manno-octulosonic acid biosynthetic process"/>
    <property type="evidence" value="ECO:0007669"/>
    <property type="project" value="UniProtKB-UniRule"/>
</dbReference>
<dbReference type="GO" id="GO:0009103">
    <property type="term" value="P:lipopolysaccharide biosynthetic process"/>
    <property type="evidence" value="ECO:0007669"/>
    <property type="project" value="UniProtKB-UniRule"/>
</dbReference>
<dbReference type="CDD" id="cd02517">
    <property type="entry name" value="CMP-KDO-Synthetase"/>
    <property type="match status" value="1"/>
</dbReference>
<dbReference type="FunFam" id="3.90.550.10:FF:000011">
    <property type="entry name" value="3-deoxy-manno-octulosonate cytidylyltransferase"/>
    <property type="match status" value="1"/>
</dbReference>
<dbReference type="Gene3D" id="3.90.550.10">
    <property type="entry name" value="Spore Coat Polysaccharide Biosynthesis Protein SpsA, Chain A"/>
    <property type="match status" value="1"/>
</dbReference>
<dbReference type="HAMAP" id="MF_00057">
    <property type="entry name" value="KdsB"/>
    <property type="match status" value="1"/>
</dbReference>
<dbReference type="InterPro" id="IPR003329">
    <property type="entry name" value="Cytidylyl_trans"/>
</dbReference>
<dbReference type="InterPro" id="IPR004528">
    <property type="entry name" value="KdsB"/>
</dbReference>
<dbReference type="InterPro" id="IPR029044">
    <property type="entry name" value="Nucleotide-diphossugar_trans"/>
</dbReference>
<dbReference type="NCBIfam" id="TIGR00466">
    <property type="entry name" value="kdsB"/>
    <property type="match status" value="1"/>
</dbReference>
<dbReference type="NCBIfam" id="NF003950">
    <property type="entry name" value="PRK05450.1-3"/>
    <property type="match status" value="1"/>
</dbReference>
<dbReference type="NCBIfam" id="NF003952">
    <property type="entry name" value="PRK05450.1-5"/>
    <property type="match status" value="1"/>
</dbReference>
<dbReference type="NCBIfam" id="NF009905">
    <property type="entry name" value="PRK13368.1"/>
    <property type="match status" value="1"/>
</dbReference>
<dbReference type="PANTHER" id="PTHR42866">
    <property type="entry name" value="3-DEOXY-MANNO-OCTULOSONATE CYTIDYLYLTRANSFERASE"/>
    <property type="match status" value="1"/>
</dbReference>
<dbReference type="PANTHER" id="PTHR42866:SF2">
    <property type="entry name" value="3-DEOXY-MANNO-OCTULOSONATE CYTIDYLYLTRANSFERASE, MITOCHONDRIAL"/>
    <property type="match status" value="1"/>
</dbReference>
<dbReference type="Pfam" id="PF02348">
    <property type="entry name" value="CTP_transf_3"/>
    <property type="match status" value="1"/>
</dbReference>
<dbReference type="SUPFAM" id="SSF53448">
    <property type="entry name" value="Nucleotide-diphospho-sugar transferases"/>
    <property type="match status" value="1"/>
</dbReference>
<sequence length="255" mass="27972">MNFIVVIPARFASSRLPGKPLADIAGKPMIQWVYERAKLSDASKVIVATDNQQVFDTVKEFGGEVLMTSPKHESGTDRLQEVAQQLGLAKDEIIVNVQGDEPLIPPAVINQVAANIQGNSWASAATLSEPLVESEMVFDPNAVKVVSDVNGAALYFSRAPIPWYRDEYQQPVSQVAPRTDGLVQRHIGIYAYKVNLLNQFVQWPMSALEAVEKLEQLRILSNGKKIHIAPSCELVPGGVDTQADLDRVRAKLKSS</sequence>
<name>KDSB_SACD2</name>
<gene>
    <name evidence="1" type="primary">kdsB</name>
    <name type="ordered locus">Sde_2058</name>
</gene>
<evidence type="ECO:0000255" key="1">
    <source>
        <dbReference type="HAMAP-Rule" id="MF_00057"/>
    </source>
</evidence>
<feature type="chain" id="PRO_1000003378" description="3-deoxy-manno-octulosonate cytidylyltransferase">
    <location>
        <begin position="1"/>
        <end position="255"/>
    </location>
</feature>
<organism>
    <name type="scientific">Saccharophagus degradans (strain 2-40 / ATCC 43961 / DSM 17024)</name>
    <dbReference type="NCBI Taxonomy" id="203122"/>
    <lineage>
        <taxon>Bacteria</taxon>
        <taxon>Pseudomonadati</taxon>
        <taxon>Pseudomonadota</taxon>
        <taxon>Gammaproteobacteria</taxon>
        <taxon>Cellvibrionales</taxon>
        <taxon>Cellvibrionaceae</taxon>
        <taxon>Saccharophagus</taxon>
    </lineage>
</organism>